<evidence type="ECO:0000255" key="1">
    <source>
        <dbReference type="HAMAP-Rule" id="MF_01540"/>
    </source>
</evidence>
<reference key="1">
    <citation type="journal article" date="2009" name="J. Bacteriol.">
        <title>Complete genome sequence and comparative genome analysis of enteropathogenic Escherichia coli O127:H6 strain E2348/69.</title>
        <authorList>
            <person name="Iguchi A."/>
            <person name="Thomson N.R."/>
            <person name="Ogura Y."/>
            <person name="Saunders D."/>
            <person name="Ooka T."/>
            <person name="Henderson I.R."/>
            <person name="Harris D."/>
            <person name="Asadulghani M."/>
            <person name="Kurokawa K."/>
            <person name="Dean P."/>
            <person name="Kenny B."/>
            <person name="Quail M.A."/>
            <person name="Thurston S."/>
            <person name="Dougan G."/>
            <person name="Hayashi T."/>
            <person name="Parkhill J."/>
            <person name="Frankel G."/>
        </authorList>
    </citation>
    <scope>NUCLEOTIDE SEQUENCE [LARGE SCALE GENOMIC DNA]</scope>
    <source>
        <strain>E2348/69 / EPEC</strain>
    </source>
</reference>
<accession>B7UHH5</accession>
<feature type="chain" id="PRO_1000185230" description="Sulfite reductase [NADPH] hemoprotein beta-component">
    <location>
        <begin position="1"/>
        <end position="570"/>
    </location>
</feature>
<feature type="binding site" evidence="1">
    <location>
        <position position="434"/>
    </location>
    <ligand>
        <name>[4Fe-4S] cluster</name>
        <dbReference type="ChEBI" id="CHEBI:49883"/>
    </ligand>
</feature>
<feature type="binding site" evidence="1">
    <location>
        <position position="440"/>
    </location>
    <ligand>
        <name>[4Fe-4S] cluster</name>
        <dbReference type="ChEBI" id="CHEBI:49883"/>
    </ligand>
</feature>
<feature type="binding site" evidence="1">
    <location>
        <position position="479"/>
    </location>
    <ligand>
        <name>[4Fe-4S] cluster</name>
        <dbReference type="ChEBI" id="CHEBI:49883"/>
    </ligand>
</feature>
<feature type="binding site" evidence="1">
    <location>
        <position position="483"/>
    </location>
    <ligand>
        <name>[4Fe-4S] cluster</name>
        <dbReference type="ChEBI" id="CHEBI:49883"/>
    </ligand>
</feature>
<feature type="binding site" description="axial binding residue" evidence="1">
    <location>
        <position position="483"/>
    </location>
    <ligand>
        <name>siroheme</name>
        <dbReference type="ChEBI" id="CHEBI:60052"/>
    </ligand>
    <ligandPart>
        <name>Fe</name>
        <dbReference type="ChEBI" id="CHEBI:18248"/>
    </ligandPart>
</feature>
<keyword id="KW-0004">4Fe-4S</keyword>
<keyword id="KW-0028">Amino-acid biosynthesis</keyword>
<keyword id="KW-0198">Cysteine biosynthesis</keyword>
<keyword id="KW-0349">Heme</keyword>
<keyword id="KW-0408">Iron</keyword>
<keyword id="KW-0411">Iron-sulfur</keyword>
<keyword id="KW-0479">Metal-binding</keyword>
<keyword id="KW-0521">NADP</keyword>
<keyword id="KW-0560">Oxidoreductase</keyword>
<keyword id="KW-1185">Reference proteome</keyword>
<gene>
    <name evidence="1" type="primary">cysI</name>
    <name type="ordered locus">E2348C_3026</name>
</gene>
<organism>
    <name type="scientific">Escherichia coli O127:H6 (strain E2348/69 / EPEC)</name>
    <dbReference type="NCBI Taxonomy" id="574521"/>
    <lineage>
        <taxon>Bacteria</taxon>
        <taxon>Pseudomonadati</taxon>
        <taxon>Pseudomonadota</taxon>
        <taxon>Gammaproteobacteria</taxon>
        <taxon>Enterobacterales</taxon>
        <taxon>Enterobacteriaceae</taxon>
        <taxon>Escherichia</taxon>
    </lineage>
</organism>
<sequence length="570" mass="63978">MSEKHPGPLVVEGKLTDAERMKLESNYLRGTIAEDLNDGLTGGFKGDNFLLIRFHGMYQQDDRDIRAERAEQKLEPRHAMLLRCRLPGGVITTKQWQAIDKFAGENTIYGSIRLTNRQTFQFHGILKKNVKPVHQMLHSVGLDALATANDMNRNVLCTSNPYESQLHAEAYEWAKKISEHLLPRTRAYAEIWLDQEKVATTDEEPILGQTYLPRKFKTTVVIPPQNDIDLHANDMNFVAIAENGKLVGFNLLVGGGLSIEHGNKKTYARTASEFGYLPLEHTLAVAEAVVTTQRDWGNRTDRKNAKTKYTLERVGVETFKAEVERRAGIKFEPIRPYEFTGRGDRIGWVKGIDDNWHLTLFIENGRILDYPGRPLKTGLLEIAKIHKGDFRITANQNLIIAGVPESEKAKIEKIAKESGLMNAVTPQRENSMACVSFPTCPLAMAEAERFLPSFIDNIDNLMAKHGVSDEHIVMRVTGCPNGCGRAMLAEVGLVGKAPGRYNLHLGGNRIGTRIPRMYKENITESEILASLDELIGRWAKEREVGEGFGDFTVRAGIIRPVLDPARDLWD</sequence>
<proteinExistence type="inferred from homology"/>
<dbReference type="EC" id="1.8.1.2" evidence="1"/>
<dbReference type="EMBL" id="FM180568">
    <property type="protein sequence ID" value="CAS10574.1"/>
    <property type="molecule type" value="Genomic_DNA"/>
</dbReference>
<dbReference type="RefSeq" id="WP_001290710.1">
    <property type="nucleotide sequence ID" value="NC_011601.1"/>
</dbReference>
<dbReference type="SMR" id="B7UHH5"/>
<dbReference type="KEGG" id="ecg:E2348C_3026"/>
<dbReference type="HOGENOM" id="CLU_001975_3_2_6"/>
<dbReference type="UniPathway" id="UPA00140">
    <property type="reaction ID" value="UER00207"/>
</dbReference>
<dbReference type="Proteomes" id="UP000008205">
    <property type="component" value="Chromosome"/>
</dbReference>
<dbReference type="GO" id="GO:0009337">
    <property type="term" value="C:sulfite reductase complex (NADPH)"/>
    <property type="evidence" value="ECO:0007669"/>
    <property type="project" value="InterPro"/>
</dbReference>
<dbReference type="GO" id="GO:0051539">
    <property type="term" value="F:4 iron, 4 sulfur cluster binding"/>
    <property type="evidence" value="ECO:0007669"/>
    <property type="project" value="UniProtKB-KW"/>
</dbReference>
<dbReference type="GO" id="GO:0020037">
    <property type="term" value="F:heme binding"/>
    <property type="evidence" value="ECO:0007669"/>
    <property type="project" value="InterPro"/>
</dbReference>
<dbReference type="GO" id="GO:0046872">
    <property type="term" value="F:metal ion binding"/>
    <property type="evidence" value="ECO:0007669"/>
    <property type="project" value="UniProtKB-KW"/>
</dbReference>
<dbReference type="GO" id="GO:0050661">
    <property type="term" value="F:NADP binding"/>
    <property type="evidence" value="ECO:0007669"/>
    <property type="project" value="InterPro"/>
</dbReference>
<dbReference type="GO" id="GO:0050311">
    <property type="term" value="F:sulfite reductase (ferredoxin) activity"/>
    <property type="evidence" value="ECO:0007669"/>
    <property type="project" value="TreeGrafter"/>
</dbReference>
<dbReference type="GO" id="GO:0004783">
    <property type="term" value="F:sulfite reductase (NADPH) activity"/>
    <property type="evidence" value="ECO:0007669"/>
    <property type="project" value="UniProtKB-UniRule"/>
</dbReference>
<dbReference type="GO" id="GO:0019344">
    <property type="term" value="P:cysteine biosynthetic process"/>
    <property type="evidence" value="ECO:0007669"/>
    <property type="project" value="UniProtKB-KW"/>
</dbReference>
<dbReference type="GO" id="GO:0070814">
    <property type="term" value="P:hydrogen sulfide biosynthetic process"/>
    <property type="evidence" value="ECO:0007669"/>
    <property type="project" value="UniProtKB-UniRule"/>
</dbReference>
<dbReference type="GO" id="GO:0000103">
    <property type="term" value="P:sulfate assimilation"/>
    <property type="evidence" value="ECO:0007669"/>
    <property type="project" value="UniProtKB-UniRule"/>
</dbReference>
<dbReference type="FunFam" id="3.30.413.10:FF:000003">
    <property type="entry name" value="Sulfite reductase [NADPH] hemoprotein beta-component"/>
    <property type="match status" value="1"/>
</dbReference>
<dbReference type="FunFam" id="3.30.413.10:FF:000004">
    <property type="entry name" value="Sulfite reductase [NADPH] hemoprotein beta-component"/>
    <property type="match status" value="1"/>
</dbReference>
<dbReference type="Gene3D" id="3.30.413.10">
    <property type="entry name" value="Sulfite Reductase Hemoprotein, domain 1"/>
    <property type="match status" value="2"/>
</dbReference>
<dbReference type="HAMAP" id="MF_01540">
    <property type="entry name" value="CysI"/>
    <property type="match status" value="1"/>
</dbReference>
<dbReference type="InterPro" id="IPR011786">
    <property type="entry name" value="CysI"/>
</dbReference>
<dbReference type="InterPro" id="IPR005117">
    <property type="entry name" value="NiRdtase/SiRdtase_haem-b_fer"/>
</dbReference>
<dbReference type="InterPro" id="IPR036136">
    <property type="entry name" value="Nit/Sulf_reduc_fer-like_dom_sf"/>
</dbReference>
<dbReference type="InterPro" id="IPR006067">
    <property type="entry name" value="NO2/SO3_Rdtase_4Fe4S_dom"/>
</dbReference>
<dbReference type="InterPro" id="IPR045169">
    <property type="entry name" value="NO2/SO3_Rdtase_4Fe4S_prot"/>
</dbReference>
<dbReference type="InterPro" id="IPR045854">
    <property type="entry name" value="NO2/SO3_Rdtase_4Fe4S_sf"/>
</dbReference>
<dbReference type="InterPro" id="IPR006066">
    <property type="entry name" value="NO2/SO3_Rdtase_FeS/sirohaem_BS"/>
</dbReference>
<dbReference type="NCBIfam" id="TIGR02041">
    <property type="entry name" value="CysI"/>
    <property type="match status" value="1"/>
</dbReference>
<dbReference type="NCBIfam" id="NF010029">
    <property type="entry name" value="PRK13504.1"/>
    <property type="match status" value="1"/>
</dbReference>
<dbReference type="PANTHER" id="PTHR11493:SF47">
    <property type="entry name" value="SULFITE REDUCTASE [NADPH] SUBUNIT BETA"/>
    <property type="match status" value="1"/>
</dbReference>
<dbReference type="PANTHER" id="PTHR11493">
    <property type="entry name" value="SULFITE REDUCTASE [NADPH] SUBUNIT BETA-RELATED"/>
    <property type="match status" value="1"/>
</dbReference>
<dbReference type="Pfam" id="PF01077">
    <property type="entry name" value="NIR_SIR"/>
    <property type="match status" value="1"/>
</dbReference>
<dbReference type="Pfam" id="PF03460">
    <property type="entry name" value="NIR_SIR_ferr"/>
    <property type="match status" value="2"/>
</dbReference>
<dbReference type="PRINTS" id="PR00397">
    <property type="entry name" value="SIROHAEM"/>
</dbReference>
<dbReference type="SUPFAM" id="SSF56014">
    <property type="entry name" value="Nitrite and sulphite reductase 4Fe-4S domain-like"/>
    <property type="match status" value="2"/>
</dbReference>
<dbReference type="SUPFAM" id="SSF55124">
    <property type="entry name" value="Nitrite/Sulfite reductase N-terminal domain-like"/>
    <property type="match status" value="2"/>
</dbReference>
<dbReference type="PROSITE" id="PS00365">
    <property type="entry name" value="NIR_SIR"/>
    <property type="match status" value="1"/>
</dbReference>
<name>CYSI_ECO27</name>
<comment type="function">
    <text evidence="1">Component of the sulfite reductase complex that catalyzes the 6-electron reduction of sulfite to sulfide. This is one of several activities required for the biosynthesis of L-cysteine from sulfate.</text>
</comment>
<comment type="catalytic activity">
    <reaction evidence="1">
        <text>hydrogen sulfide + 3 NADP(+) + 3 H2O = sulfite + 3 NADPH + 4 H(+)</text>
        <dbReference type="Rhea" id="RHEA:13801"/>
        <dbReference type="ChEBI" id="CHEBI:15377"/>
        <dbReference type="ChEBI" id="CHEBI:15378"/>
        <dbReference type="ChEBI" id="CHEBI:17359"/>
        <dbReference type="ChEBI" id="CHEBI:29919"/>
        <dbReference type="ChEBI" id="CHEBI:57783"/>
        <dbReference type="ChEBI" id="CHEBI:58349"/>
        <dbReference type="EC" id="1.8.1.2"/>
    </reaction>
</comment>
<comment type="cofactor">
    <cofactor evidence="1">
        <name>siroheme</name>
        <dbReference type="ChEBI" id="CHEBI:60052"/>
    </cofactor>
    <text evidence="1">Binds 1 siroheme per subunit.</text>
</comment>
<comment type="cofactor">
    <cofactor evidence="1">
        <name>[4Fe-4S] cluster</name>
        <dbReference type="ChEBI" id="CHEBI:49883"/>
    </cofactor>
    <text evidence="1">Binds 1 [4Fe-4S] cluster per subunit.</text>
</comment>
<comment type="pathway">
    <text evidence="1">Sulfur metabolism; hydrogen sulfide biosynthesis; hydrogen sulfide from sulfite (NADPH route): step 1/1.</text>
</comment>
<comment type="subunit">
    <text evidence="1">Alpha(8)-beta(8). The alpha component is a flavoprotein, the beta component is a hemoprotein.</text>
</comment>
<comment type="similarity">
    <text evidence="1">Belongs to the nitrite and sulfite reductase 4Fe-4S domain family.</text>
</comment>
<protein>
    <recommendedName>
        <fullName evidence="1">Sulfite reductase [NADPH] hemoprotein beta-component</fullName>
        <shortName evidence="1">SiR-HP</shortName>
        <shortName evidence="1">SiRHP</shortName>
        <ecNumber evidence="1">1.8.1.2</ecNumber>
    </recommendedName>
</protein>